<geneLocation type="plasmid">
    <name>pSymB</name>
    <name>megaplasmid 2</name>
</geneLocation>
<accession>Q92TY9</accession>
<gene>
    <name evidence="1" type="primary">minC</name>
    <name type="ordered locus">RB1354</name>
    <name type="ORF">SMb21524</name>
</gene>
<proteinExistence type="inferred from homology"/>
<name>MINC_RHIME</name>
<feature type="chain" id="PRO_0000189059" description="Probable septum site-determining protein MinC">
    <location>
        <begin position="1"/>
        <end position="249"/>
    </location>
</feature>
<feature type="region of interest" description="Disordered" evidence="2">
    <location>
        <begin position="89"/>
        <end position="130"/>
    </location>
</feature>
<feature type="compositionally biased region" description="Low complexity" evidence="2">
    <location>
        <begin position="119"/>
        <end position="129"/>
    </location>
</feature>
<keyword id="KW-0131">Cell cycle</keyword>
<keyword id="KW-0132">Cell division</keyword>
<keyword id="KW-0614">Plasmid</keyword>
<keyword id="KW-1185">Reference proteome</keyword>
<keyword id="KW-0717">Septation</keyword>
<organism>
    <name type="scientific">Rhizobium meliloti (strain 1021)</name>
    <name type="common">Ensifer meliloti</name>
    <name type="synonym">Sinorhizobium meliloti</name>
    <dbReference type="NCBI Taxonomy" id="266834"/>
    <lineage>
        <taxon>Bacteria</taxon>
        <taxon>Pseudomonadati</taxon>
        <taxon>Pseudomonadota</taxon>
        <taxon>Alphaproteobacteria</taxon>
        <taxon>Hyphomicrobiales</taxon>
        <taxon>Rhizobiaceae</taxon>
        <taxon>Sinorhizobium/Ensifer group</taxon>
        <taxon>Sinorhizobium</taxon>
    </lineage>
</organism>
<evidence type="ECO:0000255" key="1">
    <source>
        <dbReference type="HAMAP-Rule" id="MF_00267"/>
    </source>
</evidence>
<evidence type="ECO:0000256" key="2">
    <source>
        <dbReference type="SAM" id="MobiDB-lite"/>
    </source>
</evidence>
<protein>
    <recommendedName>
        <fullName evidence="1">Probable septum site-determining protein MinC</fullName>
    </recommendedName>
</protein>
<dbReference type="EMBL" id="AL591985">
    <property type="protein sequence ID" value="CAC49754.1"/>
    <property type="molecule type" value="Genomic_DNA"/>
</dbReference>
<dbReference type="PIR" id="B96011">
    <property type="entry name" value="B96011"/>
</dbReference>
<dbReference type="RefSeq" id="NP_437894.1">
    <property type="nucleotide sequence ID" value="NC_003078.1"/>
</dbReference>
<dbReference type="RefSeq" id="WP_010976172.1">
    <property type="nucleotide sequence ID" value="NC_003078.1"/>
</dbReference>
<dbReference type="SMR" id="Q92TY9"/>
<dbReference type="EnsemblBacteria" id="CAC49754">
    <property type="protein sequence ID" value="CAC49754"/>
    <property type="gene ID" value="SM_b21524"/>
</dbReference>
<dbReference type="KEGG" id="sme:SM_b21524"/>
<dbReference type="PATRIC" id="fig|266834.11.peg.6274"/>
<dbReference type="eggNOG" id="COG0850">
    <property type="taxonomic scope" value="Bacteria"/>
</dbReference>
<dbReference type="HOGENOM" id="CLU_067812_1_0_5"/>
<dbReference type="OrthoDB" id="9794530at2"/>
<dbReference type="Proteomes" id="UP000001976">
    <property type="component" value="Plasmid pSymB"/>
</dbReference>
<dbReference type="GO" id="GO:0000902">
    <property type="term" value="P:cell morphogenesis"/>
    <property type="evidence" value="ECO:0007669"/>
    <property type="project" value="InterPro"/>
</dbReference>
<dbReference type="GO" id="GO:0000917">
    <property type="term" value="P:division septum assembly"/>
    <property type="evidence" value="ECO:0007669"/>
    <property type="project" value="UniProtKB-KW"/>
</dbReference>
<dbReference type="GO" id="GO:1901891">
    <property type="term" value="P:regulation of cell septum assembly"/>
    <property type="evidence" value="ECO:0007669"/>
    <property type="project" value="InterPro"/>
</dbReference>
<dbReference type="Gene3D" id="2.160.20.70">
    <property type="match status" value="1"/>
</dbReference>
<dbReference type="Gene3D" id="3.30.70.260">
    <property type="match status" value="1"/>
</dbReference>
<dbReference type="HAMAP" id="MF_00267">
    <property type="entry name" value="MinC"/>
    <property type="match status" value="1"/>
</dbReference>
<dbReference type="InterPro" id="IPR016098">
    <property type="entry name" value="CAP/MinC_C"/>
</dbReference>
<dbReference type="InterPro" id="IPR013033">
    <property type="entry name" value="MinC"/>
</dbReference>
<dbReference type="InterPro" id="IPR036145">
    <property type="entry name" value="MinC_C_sf"/>
</dbReference>
<dbReference type="InterPro" id="IPR005526">
    <property type="entry name" value="Septum_form_inhib_MinC_C"/>
</dbReference>
<dbReference type="NCBIfam" id="TIGR01222">
    <property type="entry name" value="minC"/>
    <property type="match status" value="1"/>
</dbReference>
<dbReference type="PANTHER" id="PTHR34108">
    <property type="entry name" value="SEPTUM SITE-DETERMINING PROTEIN MINC"/>
    <property type="match status" value="1"/>
</dbReference>
<dbReference type="PANTHER" id="PTHR34108:SF1">
    <property type="entry name" value="SEPTUM SITE-DETERMINING PROTEIN MINC"/>
    <property type="match status" value="1"/>
</dbReference>
<dbReference type="Pfam" id="PF03775">
    <property type="entry name" value="MinC_C"/>
    <property type="match status" value="1"/>
</dbReference>
<dbReference type="SUPFAM" id="SSF63848">
    <property type="entry name" value="Cell-division inhibitor MinC, C-terminal domain"/>
    <property type="match status" value="1"/>
</dbReference>
<sequence length="249" mass="26599">MTKVLTDARSIRIKGRSFLALVLSPELPLDWWLGRLDDLASRSAGFFLGRPVVLDVADLEIDRKQLKSLLDELGQRNVRVMGIEGGRPSLFEPGMPPAMKGGRPAPDFEVPEVDPADPPKAGKGKAAAPITPEEVQPVRATASIIVREPVRSGQSVIFPEGDVTVVGSVASGAEIVAGGSVHIYGTLRGRALAGSVGNASARIFCRRLEAELLAIDGVYKTAEDMAPNLRGQSVQLWLEGDSIMAERLN</sequence>
<comment type="function">
    <text evidence="1">Cell division inhibitor that blocks the formation of polar Z ring septums. Rapidly oscillates between the poles of the cell to destabilize FtsZ filaments that have formed before they mature into polar Z rings. Prevents FtsZ polymerization.</text>
</comment>
<comment type="subunit">
    <text evidence="1">Interacts with MinD and FtsZ.</text>
</comment>
<comment type="similarity">
    <text evidence="1">Belongs to the MinC family.</text>
</comment>
<reference key="1">
    <citation type="journal article" date="2001" name="Proc. Natl. Acad. Sci. U.S.A.">
        <title>The complete sequence of the 1,683-kb pSymB megaplasmid from the N2-fixing endosymbiont Sinorhizobium meliloti.</title>
        <authorList>
            <person name="Finan T.M."/>
            <person name="Weidner S."/>
            <person name="Wong K."/>
            <person name="Buhrmester J."/>
            <person name="Chain P."/>
            <person name="Vorhoelter F.J."/>
            <person name="Hernandez-Lucas I."/>
            <person name="Becker A."/>
            <person name="Cowie A."/>
            <person name="Gouzy J."/>
            <person name="Golding B."/>
            <person name="Puehler A."/>
        </authorList>
    </citation>
    <scope>NUCLEOTIDE SEQUENCE [LARGE SCALE GENOMIC DNA]</scope>
    <source>
        <strain>1021</strain>
    </source>
</reference>
<reference key="2">
    <citation type="journal article" date="2001" name="Science">
        <title>The composite genome of the legume symbiont Sinorhizobium meliloti.</title>
        <authorList>
            <person name="Galibert F."/>
            <person name="Finan T.M."/>
            <person name="Long S.R."/>
            <person name="Puehler A."/>
            <person name="Abola P."/>
            <person name="Ampe F."/>
            <person name="Barloy-Hubler F."/>
            <person name="Barnett M.J."/>
            <person name="Becker A."/>
            <person name="Boistard P."/>
            <person name="Bothe G."/>
            <person name="Boutry M."/>
            <person name="Bowser L."/>
            <person name="Buhrmester J."/>
            <person name="Cadieu E."/>
            <person name="Capela D."/>
            <person name="Chain P."/>
            <person name="Cowie A."/>
            <person name="Davis R.W."/>
            <person name="Dreano S."/>
            <person name="Federspiel N.A."/>
            <person name="Fisher R.F."/>
            <person name="Gloux S."/>
            <person name="Godrie T."/>
            <person name="Goffeau A."/>
            <person name="Golding B."/>
            <person name="Gouzy J."/>
            <person name="Gurjal M."/>
            <person name="Hernandez-Lucas I."/>
            <person name="Hong A."/>
            <person name="Huizar L."/>
            <person name="Hyman R.W."/>
            <person name="Jones T."/>
            <person name="Kahn D."/>
            <person name="Kahn M.L."/>
            <person name="Kalman S."/>
            <person name="Keating D.H."/>
            <person name="Kiss E."/>
            <person name="Komp C."/>
            <person name="Lelaure V."/>
            <person name="Masuy D."/>
            <person name="Palm C."/>
            <person name="Peck M.C."/>
            <person name="Pohl T.M."/>
            <person name="Portetelle D."/>
            <person name="Purnelle B."/>
            <person name="Ramsperger U."/>
            <person name="Surzycki R."/>
            <person name="Thebault P."/>
            <person name="Vandenbol M."/>
            <person name="Vorhoelter F.J."/>
            <person name="Weidner S."/>
            <person name="Wells D.H."/>
            <person name="Wong K."/>
            <person name="Yeh K.-C."/>
            <person name="Batut J."/>
        </authorList>
    </citation>
    <scope>NUCLEOTIDE SEQUENCE [LARGE SCALE GENOMIC DNA]</scope>
    <source>
        <strain>1021</strain>
    </source>
</reference>